<evidence type="ECO:0000255" key="1">
    <source>
        <dbReference type="HAMAP-Rule" id="MF_00473"/>
    </source>
</evidence>
<dbReference type="EC" id="5.3.1.9" evidence="1"/>
<dbReference type="EMBL" id="CP001043">
    <property type="protein sequence ID" value="ACC70208.1"/>
    <property type="molecule type" value="Genomic_DNA"/>
</dbReference>
<dbReference type="RefSeq" id="WP_012400422.1">
    <property type="nucleotide sequence ID" value="NC_010622.1"/>
</dbReference>
<dbReference type="SMR" id="B2JGM3"/>
<dbReference type="STRING" id="391038.Bphy_1019"/>
<dbReference type="KEGG" id="bph:Bphy_1019"/>
<dbReference type="eggNOG" id="COG0166">
    <property type="taxonomic scope" value="Bacteria"/>
</dbReference>
<dbReference type="HOGENOM" id="CLU_017947_3_1_4"/>
<dbReference type="OrthoDB" id="140919at2"/>
<dbReference type="UniPathway" id="UPA00109">
    <property type="reaction ID" value="UER00181"/>
</dbReference>
<dbReference type="UniPathway" id="UPA00138"/>
<dbReference type="Proteomes" id="UP000001192">
    <property type="component" value="Chromosome 1"/>
</dbReference>
<dbReference type="GO" id="GO:0005829">
    <property type="term" value="C:cytosol"/>
    <property type="evidence" value="ECO:0007669"/>
    <property type="project" value="TreeGrafter"/>
</dbReference>
<dbReference type="GO" id="GO:0097367">
    <property type="term" value="F:carbohydrate derivative binding"/>
    <property type="evidence" value="ECO:0007669"/>
    <property type="project" value="InterPro"/>
</dbReference>
<dbReference type="GO" id="GO:0004347">
    <property type="term" value="F:glucose-6-phosphate isomerase activity"/>
    <property type="evidence" value="ECO:0007669"/>
    <property type="project" value="UniProtKB-UniRule"/>
</dbReference>
<dbReference type="GO" id="GO:0048029">
    <property type="term" value="F:monosaccharide binding"/>
    <property type="evidence" value="ECO:0007669"/>
    <property type="project" value="TreeGrafter"/>
</dbReference>
<dbReference type="GO" id="GO:0006094">
    <property type="term" value="P:gluconeogenesis"/>
    <property type="evidence" value="ECO:0007669"/>
    <property type="project" value="UniProtKB-UniRule"/>
</dbReference>
<dbReference type="GO" id="GO:0051156">
    <property type="term" value="P:glucose 6-phosphate metabolic process"/>
    <property type="evidence" value="ECO:0007669"/>
    <property type="project" value="TreeGrafter"/>
</dbReference>
<dbReference type="GO" id="GO:0006096">
    <property type="term" value="P:glycolytic process"/>
    <property type="evidence" value="ECO:0007669"/>
    <property type="project" value="UniProtKB-UniRule"/>
</dbReference>
<dbReference type="CDD" id="cd05015">
    <property type="entry name" value="SIS_PGI_1"/>
    <property type="match status" value="1"/>
</dbReference>
<dbReference type="CDD" id="cd05016">
    <property type="entry name" value="SIS_PGI_2"/>
    <property type="match status" value="1"/>
</dbReference>
<dbReference type="Gene3D" id="1.10.1390.10">
    <property type="match status" value="1"/>
</dbReference>
<dbReference type="Gene3D" id="3.40.50.10490">
    <property type="entry name" value="Glucose-6-phosphate isomerase like protein, domain 1"/>
    <property type="match status" value="2"/>
</dbReference>
<dbReference type="HAMAP" id="MF_00473">
    <property type="entry name" value="G6P_isomerase"/>
    <property type="match status" value="1"/>
</dbReference>
<dbReference type="InterPro" id="IPR001672">
    <property type="entry name" value="G6P_Isomerase"/>
</dbReference>
<dbReference type="InterPro" id="IPR023096">
    <property type="entry name" value="G6P_Isomerase_C"/>
</dbReference>
<dbReference type="InterPro" id="IPR018189">
    <property type="entry name" value="Phosphoglucose_isomerase_CS"/>
</dbReference>
<dbReference type="InterPro" id="IPR046348">
    <property type="entry name" value="SIS_dom_sf"/>
</dbReference>
<dbReference type="InterPro" id="IPR035476">
    <property type="entry name" value="SIS_PGI_1"/>
</dbReference>
<dbReference type="InterPro" id="IPR035482">
    <property type="entry name" value="SIS_PGI_2"/>
</dbReference>
<dbReference type="NCBIfam" id="NF001211">
    <property type="entry name" value="PRK00179.1"/>
    <property type="match status" value="1"/>
</dbReference>
<dbReference type="PANTHER" id="PTHR11469">
    <property type="entry name" value="GLUCOSE-6-PHOSPHATE ISOMERASE"/>
    <property type="match status" value="1"/>
</dbReference>
<dbReference type="PANTHER" id="PTHR11469:SF1">
    <property type="entry name" value="GLUCOSE-6-PHOSPHATE ISOMERASE"/>
    <property type="match status" value="1"/>
</dbReference>
<dbReference type="Pfam" id="PF00342">
    <property type="entry name" value="PGI"/>
    <property type="match status" value="1"/>
</dbReference>
<dbReference type="PRINTS" id="PR00662">
    <property type="entry name" value="G6PISOMERASE"/>
</dbReference>
<dbReference type="SUPFAM" id="SSF53697">
    <property type="entry name" value="SIS domain"/>
    <property type="match status" value="1"/>
</dbReference>
<dbReference type="PROSITE" id="PS00765">
    <property type="entry name" value="P_GLUCOSE_ISOMERASE_1"/>
    <property type="match status" value="1"/>
</dbReference>
<dbReference type="PROSITE" id="PS00174">
    <property type="entry name" value="P_GLUCOSE_ISOMERASE_2"/>
    <property type="match status" value="1"/>
</dbReference>
<dbReference type="PROSITE" id="PS51463">
    <property type="entry name" value="P_GLUCOSE_ISOMERASE_3"/>
    <property type="match status" value="1"/>
</dbReference>
<proteinExistence type="inferred from homology"/>
<sequence>MTLNSLPAWNSLQTHYGQIRDARLRDWFAPENDPAPTRAERFTLSGGGLAADFSKNRITDDTLKLLVQLAREAQVETRRDAMFAGETVNPTEGRAVLHTALRASNPTSPFYGKVQAERAKMAAFADKVRSGEWTGYTGKRIRHVVNIGIGGSDLGPKMVVHALQHLATPEISTHFVSNVDGADLYRVLQQINPEETLAIIVSKTFTTLETMTNANSLRDWFIQKGCPESELAKHFVGVSANPAEVVKFGIAQENVFEMWDWVGGRYSLWSAVGLSIVIAIGPKQFDELLAGANEMDEHFRSAPLERNLPVLMGMIGIWYRNFFGSQSYLVAPYSEALHFLPSYLQQLEMESNGKQACLDGSFVTYDTSAVTWGEPGTNGQHAFFQMLHQGPTIVPIDFVAVLTPEHPLVSHHPKLLANCFAQSEALMLGRTREEAEKVAGRDKPDLVPHIMFPGNRPTTTLLVDALTARSLGALIALYEHKVLVQGTVWNINSFDQWGVELGKILGKVVEADLTAATVDETKHDSSTSALIARARAALKR</sequence>
<keyword id="KW-0963">Cytoplasm</keyword>
<keyword id="KW-0312">Gluconeogenesis</keyword>
<keyword id="KW-0324">Glycolysis</keyword>
<keyword id="KW-0413">Isomerase</keyword>
<keyword id="KW-1185">Reference proteome</keyword>
<name>G6PI_PARP8</name>
<comment type="function">
    <text evidence="1">Catalyzes the reversible isomerization of glucose-6-phosphate to fructose-6-phosphate.</text>
</comment>
<comment type="catalytic activity">
    <reaction evidence="1">
        <text>alpha-D-glucose 6-phosphate = beta-D-fructose 6-phosphate</text>
        <dbReference type="Rhea" id="RHEA:11816"/>
        <dbReference type="ChEBI" id="CHEBI:57634"/>
        <dbReference type="ChEBI" id="CHEBI:58225"/>
        <dbReference type="EC" id="5.3.1.9"/>
    </reaction>
</comment>
<comment type="pathway">
    <text evidence="1">Carbohydrate biosynthesis; gluconeogenesis.</text>
</comment>
<comment type="pathway">
    <text evidence="1">Carbohydrate degradation; glycolysis; D-glyceraldehyde 3-phosphate and glycerone phosphate from D-glucose: step 2/4.</text>
</comment>
<comment type="subcellular location">
    <subcellularLocation>
        <location evidence="1">Cytoplasm</location>
    </subcellularLocation>
</comment>
<comment type="similarity">
    <text evidence="1">Belongs to the GPI family.</text>
</comment>
<feature type="chain" id="PRO_1000125703" description="Glucose-6-phosphate isomerase">
    <location>
        <begin position="1"/>
        <end position="540"/>
    </location>
</feature>
<feature type="active site" description="Proton donor" evidence="1">
    <location>
        <position position="350"/>
    </location>
</feature>
<feature type="active site" evidence="1">
    <location>
        <position position="381"/>
    </location>
</feature>
<feature type="active site" evidence="1">
    <location>
        <position position="503"/>
    </location>
</feature>
<reference key="1">
    <citation type="journal article" date="2014" name="Stand. Genomic Sci.">
        <title>Complete genome sequence of Burkholderia phymatum STM815(T), a broad host range and efficient nitrogen-fixing symbiont of Mimosa species.</title>
        <authorList>
            <person name="Moulin L."/>
            <person name="Klonowska A."/>
            <person name="Caroline B."/>
            <person name="Booth K."/>
            <person name="Vriezen J.A."/>
            <person name="Melkonian R."/>
            <person name="James E.K."/>
            <person name="Young J.P."/>
            <person name="Bena G."/>
            <person name="Hauser L."/>
            <person name="Land M."/>
            <person name="Kyrpides N."/>
            <person name="Bruce D."/>
            <person name="Chain P."/>
            <person name="Copeland A."/>
            <person name="Pitluck S."/>
            <person name="Woyke T."/>
            <person name="Lizotte-Waniewski M."/>
            <person name="Bristow J."/>
            <person name="Riley M."/>
        </authorList>
    </citation>
    <scope>NUCLEOTIDE SEQUENCE [LARGE SCALE GENOMIC DNA]</scope>
    <source>
        <strain>DSM 17167 / CIP 108236 / LMG 21445 / STM815</strain>
    </source>
</reference>
<protein>
    <recommendedName>
        <fullName evidence="1">Glucose-6-phosphate isomerase</fullName>
        <shortName evidence="1">GPI</shortName>
        <ecNumber evidence="1">5.3.1.9</ecNumber>
    </recommendedName>
    <alternativeName>
        <fullName evidence="1">Phosphoglucose isomerase</fullName>
        <shortName evidence="1">PGI</shortName>
    </alternativeName>
    <alternativeName>
        <fullName evidence="1">Phosphohexose isomerase</fullName>
        <shortName evidence="1">PHI</shortName>
    </alternativeName>
</protein>
<accession>B2JGM3</accession>
<organism>
    <name type="scientific">Paraburkholderia phymatum (strain DSM 17167 / CIP 108236 / LMG 21445 / STM815)</name>
    <name type="common">Burkholderia phymatum</name>
    <dbReference type="NCBI Taxonomy" id="391038"/>
    <lineage>
        <taxon>Bacteria</taxon>
        <taxon>Pseudomonadati</taxon>
        <taxon>Pseudomonadota</taxon>
        <taxon>Betaproteobacteria</taxon>
        <taxon>Burkholderiales</taxon>
        <taxon>Burkholderiaceae</taxon>
        <taxon>Paraburkholderia</taxon>
    </lineage>
</organism>
<gene>
    <name evidence="1" type="primary">pgi</name>
    <name type="ordered locus">Bphy_1019</name>
</gene>